<feature type="chain" id="PRO_0000430932" description="Putative transmembrane protein INAFM2">
    <location>
        <begin position="1"/>
        <end position="153"/>
    </location>
</feature>
<feature type="transmembrane region" description="Helical" evidence="1">
    <location>
        <begin position="36"/>
        <end position="56"/>
    </location>
</feature>
<feature type="region of interest" description="Disordered" evidence="2">
    <location>
        <begin position="1"/>
        <end position="24"/>
    </location>
</feature>
<feature type="region of interest" description="Disordered" evidence="2">
    <location>
        <begin position="66"/>
        <end position="153"/>
    </location>
</feature>
<feature type="compositionally biased region" description="Basic and acidic residues" evidence="2">
    <location>
        <begin position="1"/>
        <end position="23"/>
    </location>
</feature>
<feature type="compositionally biased region" description="Low complexity" evidence="2">
    <location>
        <begin position="79"/>
        <end position="101"/>
    </location>
</feature>
<feature type="compositionally biased region" description="Pro residues" evidence="2">
    <location>
        <begin position="118"/>
        <end position="131"/>
    </location>
</feature>
<organism>
    <name type="scientific">Homo sapiens</name>
    <name type="common">Human</name>
    <dbReference type="NCBI Taxonomy" id="9606"/>
    <lineage>
        <taxon>Eukaryota</taxon>
        <taxon>Metazoa</taxon>
        <taxon>Chordata</taxon>
        <taxon>Craniata</taxon>
        <taxon>Vertebrata</taxon>
        <taxon>Euteleostomi</taxon>
        <taxon>Mammalia</taxon>
        <taxon>Eutheria</taxon>
        <taxon>Euarchontoglires</taxon>
        <taxon>Primates</taxon>
        <taxon>Haplorrhini</taxon>
        <taxon>Catarrhini</taxon>
        <taxon>Hominidae</taxon>
        <taxon>Homo</taxon>
    </lineage>
</organism>
<protein>
    <recommendedName>
        <fullName evidence="5">Putative transmembrane protein INAFM2</fullName>
    </recommendedName>
    <alternativeName>
        <fullName evidence="6">InaF-motif-containing protein 2</fullName>
    </alternativeName>
    <alternativeName>
        <fullName evidence="4">Osteogenesis up-regulated transcript 1</fullName>
    </alternativeName>
</protein>
<comment type="subcellular location">
    <subcellularLocation>
        <location evidence="1">Membrane</location>
        <topology evidence="1">Single-pass membrane protein</topology>
    </subcellularLocation>
</comment>
<comment type="developmental stage">
    <text evidence="3">Up-regulated during osteogenesis.</text>
</comment>
<name>INAM2_HUMAN</name>
<gene>
    <name evidence="6" type="primary">INAFM2</name>
    <name evidence="6" type="synonym">LINC00984</name>
    <name evidence="4" type="synonym">OGU1</name>
</gene>
<proteinExistence type="evidence at protein level"/>
<accession>P0DMQ5</accession>
<sequence length="153" mass="15439">MKERDAAPAERGKPATYTGDKKAKMAAKTNKKWVRLATVFAYVLSVSLAAIVLAVYYSLIWQPVGAGTSGGAAGPPPGGSNATGPSGTSGAAAAGPNTTGSSRREAPRDVPPLQAARPAPPEPPADSPPAGPLERPRGPDEDEEETAAAPGSR</sequence>
<keyword id="KW-0472">Membrane</keyword>
<keyword id="KW-1267">Proteomics identification</keyword>
<keyword id="KW-1185">Reference proteome</keyword>
<keyword id="KW-0812">Transmembrane</keyword>
<keyword id="KW-1133">Transmembrane helix</keyword>
<dbReference type="EMBL" id="AC013356">
    <property type="status" value="NOT_ANNOTATED_CDS"/>
    <property type="molecule type" value="Genomic_DNA"/>
</dbReference>
<dbReference type="CCDS" id="CCDS86448.1"/>
<dbReference type="RefSeq" id="NP_001288197.1">
    <property type="nucleotide sequence ID" value="NM_001301268.2"/>
</dbReference>
<dbReference type="RefSeq" id="XP_011519451.1">
    <property type="nucleotide sequence ID" value="XM_011521149.4"/>
</dbReference>
<dbReference type="RefSeq" id="XP_054233144.1">
    <property type="nucleotide sequence ID" value="XM_054377169.1"/>
</dbReference>
<dbReference type="SMR" id="P0DMQ5"/>
<dbReference type="BioGRID" id="1527884">
    <property type="interactions" value="1"/>
</dbReference>
<dbReference type="FunCoup" id="P0DMQ5">
    <property type="interactions" value="2"/>
</dbReference>
<dbReference type="TCDB" id="8.A.135.2.2">
    <property type="family name" value="the trp cation channel auxiliary subunit, inaf (inaf) family"/>
</dbReference>
<dbReference type="GlyGen" id="P0DMQ5">
    <property type="glycosylation" value="1 site, 1 O-linked glycan (1 site)"/>
</dbReference>
<dbReference type="BioMuta" id="INAFM2"/>
<dbReference type="MassIVE" id="P0DMQ5"/>
<dbReference type="PeptideAtlas" id="P0DMQ5"/>
<dbReference type="Pumba" id="P0DMQ5"/>
<dbReference type="DNASU" id="100505573"/>
<dbReference type="Ensembl" id="ENST00000638170.2">
    <property type="protein sequence ID" value="ENSP00000492634.1"/>
    <property type="gene ID" value="ENSG00000259330.3"/>
</dbReference>
<dbReference type="GeneID" id="100505573"/>
<dbReference type="KEGG" id="hsa:100505573"/>
<dbReference type="MANE-Select" id="ENST00000638170.2">
    <property type="protein sequence ID" value="ENSP00000492634.1"/>
    <property type="RefSeq nucleotide sequence ID" value="NM_001301268.2"/>
    <property type="RefSeq protein sequence ID" value="NP_001288197.1"/>
</dbReference>
<dbReference type="AGR" id="HGNC:35165"/>
<dbReference type="CTD" id="100505573"/>
<dbReference type="DisGeNET" id="100505573"/>
<dbReference type="GeneCards" id="INAFM2"/>
<dbReference type="HGNC" id="HGNC:35165">
    <property type="gene designation" value="INAFM2"/>
</dbReference>
<dbReference type="HPA" id="ENSG00000259330">
    <property type="expression patterns" value="Low tissue specificity"/>
</dbReference>
<dbReference type="neXtProt" id="NX_P0DMQ5"/>
<dbReference type="OpenTargets" id="ENSG00000259330"/>
<dbReference type="VEuPathDB" id="HostDB:ENSG00000259330"/>
<dbReference type="GeneTree" id="ENSGT00390000005766"/>
<dbReference type="InParanoid" id="P0DMQ5"/>
<dbReference type="OrthoDB" id="8113027at2759"/>
<dbReference type="PAN-GO" id="P0DMQ5">
    <property type="GO annotations" value="0 GO annotations based on evolutionary models"/>
</dbReference>
<dbReference type="PathwayCommons" id="P0DMQ5"/>
<dbReference type="BioGRID-ORCS" id="100505573">
    <property type="hits" value="3 hits in 120 CRISPR screens"/>
</dbReference>
<dbReference type="ChiTaRS" id="INAFM2">
    <property type="organism name" value="human"/>
</dbReference>
<dbReference type="Pharos" id="P0DMQ5">
    <property type="development level" value="Tdark"/>
</dbReference>
<dbReference type="PRO" id="PR:P0DMQ5"/>
<dbReference type="Proteomes" id="UP000005640">
    <property type="component" value="Chromosome 15"/>
</dbReference>
<dbReference type="RNAct" id="P0DMQ5">
    <property type="molecule type" value="protein"/>
</dbReference>
<dbReference type="Bgee" id="ENSG00000259330">
    <property type="expression patterns" value="Expressed in right coronary artery and 166 other cell types or tissues"/>
</dbReference>
<dbReference type="GO" id="GO:0016020">
    <property type="term" value="C:membrane"/>
    <property type="evidence" value="ECO:0007669"/>
    <property type="project" value="UniProtKB-SubCell"/>
</dbReference>
<dbReference type="InterPro" id="IPR029162">
    <property type="entry name" value="InaF-motif"/>
</dbReference>
<dbReference type="PANTHER" id="PTHR34929:SF4">
    <property type="entry name" value="TRANSMEMBRANE PROTEIN INAFM2-RELATED"/>
    <property type="match status" value="1"/>
</dbReference>
<dbReference type="PANTHER" id="PTHR34929">
    <property type="entry name" value="ZGC:153157"/>
    <property type="match status" value="1"/>
</dbReference>
<dbReference type="Pfam" id="PF15018">
    <property type="entry name" value="InaF-motif"/>
    <property type="match status" value="1"/>
</dbReference>
<reference key="1">
    <citation type="journal article" date="2006" name="Nature">
        <title>Analysis of the DNA sequence and duplication history of human chromosome 15.</title>
        <authorList>
            <person name="Zody M.C."/>
            <person name="Garber M."/>
            <person name="Sharpe T."/>
            <person name="Young S.K."/>
            <person name="Rowen L."/>
            <person name="O'Neill K."/>
            <person name="Whittaker C.A."/>
            <person name="Kamal M."/>
            <person name="Chang J.L."/>
            <person name="Cuomo C.A."/>
            <person name="Dewar K."/>
            <person name="FitzGerald M.G."/>
            <person name="Kodira C.D."/>
            <person name="Madan A."/>
            <person name="Qin S."/>
            <person name="Yang X."/>
            <person name="Abbasi N."/>
            <person name="Abouelleil A."/>
            <person name="Arachchi H.M."/>
            <person name="Baradarani L."/>
            <person name="Birditt B."/>
            <person name="Bloom S."/>
            <person name="Bloom T."/>
            <person name="Borowsky M.L."/>
            <person name="Burke J."/>
            <person name="Butler J."/>
            <person name="Cook A."/>
            <person name="DeArellano K."/>
            <person name="DeCaprio D."/>
            <person name="Dorris L. III"/>
            <person name="Dors M."/>
            <person name="Eichler E.E."/>
            <person name="Engels R."/>
            <person name="Fahey J."/>
            <person name="Fleetwood P."/>
            <person name="Friedman C."/>
            <person name="Gearin G."/>
            <person name="Hall J.L."/>
            <person name="Hensley G."/>
            <person name="Johnson E."/>
            <person name="Jones C."/>
            <person name="Kamat A."/>
            <person name="Kaur A."/>
            <person name="Locke D.P."/>
            <person name="Madan A."/>
            <person name="Munson G."/>
            <person name="Jaffe D.B."/>
            <person name="Lui A."/>
            <person name="Macdonald P."/>
            <person name="Mauceli E."/>
            <person name="Naylor J.W."/>
            <person name="Nesbitt R."/>
            <person name="Nicol R."/>
            <person name="O'Leary S.B."/>
            <person name="Ratcliffe A."/>
            <person name="Rounsley S."/>
            <person name="She X."/>
            <person name="Sneddon K.M.B."/>
            <person name="Stewart S."/>
            <person name="Sougnez C."/>
            <person name="Stone S.M."/>
            <person name="Topham K."/>
            <person name="Vincent D."/>
            <person name="Wang S."/>
            <person name="Zimmer A.R."/>
            <person name="Birren B.W."/>
            <person name="Hood L."/>
            <person name="Lander E.S."/>
            <person name="Nusbaum C."/>
        </authorList>
    </citation>
    <scope>NUCLEOTIDE SEQUENCE [LARGE SCALE GENOMIC DNA]</scope>
</reference>
<reference key="2">
    <citation type="journal article" date="2009" name="Nucleic Acids Res.">
        <title>Transcripts of unknown function in multiple-signaling pathways involved in human stem cell differentiation.</title>
        <authorList>
            <person name="Kikuchi K."/>
            <person name="Fukuda M."/>
            <person name="Ito T."/>
            <person name="Inoue M."/>
            <person name="Yokoi T."/>
            <person name="Chiku S."/>
            <person name="Mitsuyama T."/>
            <person name="Asai K."/>
            <person name="Hirose T."/>
            <person name="Aizawa Y."/>
        </authorList>
    </citation>
    <scope>DEVELOPMENTAL STAGE</scope>
</reference>
<evidence type="ECO:0000255" key="1"/>
<evidence type="ECO:0000256" key="2">
    <source>
        <dbReference type="SAM" id="MobiDB-lite"/>
    </source>
</evidence>
<evidence type="ECO:0000269" key="3">
    <source>
    </source>
</evidence>
<evidence type="ECO:0000303" key="4">
    <source>
    </source>
</evidence>
<evidence type="ECO:0000305" key="5"/>
<evidence type="ECO:0000312" key="6">
    <source>
        <dbReference type="HGNC" id="HGNC:35165"/>
    </source>
</evidence>